<comment type="function">
    <text evidence="1">Allows the formation of correctly charged Asn-tRNA(Asn) or Gln-tRNA(Gln) through the transamidation of misacylated Asp-tRNA(Asn) or Glu-tRNA(Gln) in organisms which lack either or both of asparaginyl-tRNA or glutaminyl-tRNA synthetases. The reaction takes place in the presence of glutamine and ATP through an activated phospho-Asp-tRNA(Asn) or phospho-Glu-tRNA(Gln).</text>
</comment>
<comment type="catalytic activity">
    <reaction evidence="1">
        <text>L-glutamyl-tRNA(Gln) + L-glutamine + ATP + H2O = L-glutaminyl-tRNA(Gln) + L-glutamate + ADP + phosphate + H(+)</text>
        <dbReference type="Rhea" id="RHEA:17521"/>
        <dbReference type="Rhea" id="RHEA-COMP:9681"/>
        <dbReference type="Rhea" id="RHEA-COMP:9684"/>
        <dbReference type="ChEBI" id="CHEBI:15377"/>
        <dbReference type="ChEBI" id="CHEBI:15378"/>
        <dbReference type="ChEBI" id="CHEBI:29985"/>
        <dbReference type="ChEBI" id="CHEBI:30616"/>
        <dbReference type="ChEBI" id="CHEBI:43474"/>
        <dbReference type="ChEBI" id="CHEBI:58359"/>
        <dbReference type="ChEBI" id="CHEBI:78520"/>
        <dbReference type="ChEBI" id="CHEBI:78521"/>
        <dbReference type="ChEBI" id="CHEBI:456216"/>
    </reaction>
</comment>
<comment type="catalytic activity">
    <reaction evidence="1">
        <text>L-aspartyl-tRNA(Asn) + L-glutamine + ATP + H2O = L-asparaginyl-tRNA(Asn) + L-glutamate + ADP + phosphate + 2 H(+)</text>
        <dbReference type="Rhea" id="RHEA:14513"/>
        <dbReference type="Rhea" id="RHEA-COMP:9674"/>
        <dbReference type="Rhea" id="RHEA-COMP:9677"/>
        <dbReference type="ChEBI" id="CHEBI:15377"/>
        <dbReference type="ChEBI" id="CHEBI:15378"/>
        <dbReference type="ChEBI" id="CHEBI:29985"/>
        <dbReference type="ChEBI" id="CHEBI:30616"/>
        <dbReference type="ChEBI" id="CHEBI:43474"/>
        <dbReference type="ChEBI" id="CHEBI:58359"/>
        <dbReference type="ChEBI" id="CHEBI:78515"/>
        <dbReference type="ChEBI" id="CHEBI:78516"/>
        <dbReference type="ChEBI" id="CHEBI:456216"/>
    </reaction>
</comment>
<comment type="subunit">
    <text evidence="1">Heterotrimer of A, B and C subunits.</text>
</comment>
<comment type="similarity">
    <text evidence="1">Belongs to the GatC family.</text>
</comment>
<organism>
    <name type="scientific">Syntrophotalea carbinolica (strain DSM 2380 / NBRC 103641 / GraBd1)</name>
    <name type="common">Pelobacter carbinolicus</name>
    <dbReference type="NCBI Taxonomy" id="338963"/>
    <lineage>
        <taxon>Bacteria</taxon>
        <taxon>Pseudomonadati</taxon>
        <taxon>Thermodesulfobacteriota</taxon>
        <taxon>Desulfuromonadia</taxon>
        <taxon>Desulfuromonadales</taxon>
        <taxon>Syntrophotaleaceae</taxon>
        <taxon>Syntrophotalea</taxon>
    </lineage>
</organism>
<sequence length="95" mass="10390">MKINREQVEHVARLARLALSEDELASLTDDMDAILGYVEKLNELDTDHIIPTAHAVPVENAFREDCAGSSIGTDKALQNAPEASDNCFVVPKVIE</sequence>
<evidence type="ECO:0000255" key="1">
    <source>
        <dbReference type="HAMAP-Rule" id="MF_00122"/>
    </source>
</evidence>
<dbReference type="EC" id="6.3.5.-" evidence="1"/>
<dbReference type="EMBL" id="CP000142">
    <property type="protein sequence ID" value="ABA89406.1"/>
    <property type="molecule type" value="Genomic_DNA"/>
</dbReference>
<dbReference type="RefSeq" id="WP_011341919.1">
    <property type="nucleotide sequence ID" value="NC_007498.2"/>
</dbReference>
<dbReference type="SMR" id="Q3A2K1"/>
<dbReference type="STRING" id="338963.Pcar_2167"/>
<dbReference type="KEGG" id="pca:Pcar_2167"/>
<dbReference type="eggNOG" id="COG0721">
    <property type="taxonomic scope" value="Bacteria"/>
</dbReference>
<dbReference type="HOGENOM" id="CLU_105899_1_2_7"/>
<dbReference type="OrthoDB" id="9813938at2"/>
<dbReference type="Proteomes" id="UP000002534">
    <property type="component" value="Chromosome"/>
</dbReference>
<dbReference type="GO" id="GO:0050566">
    <property type="term" value="F:asparaginyl-tRNA synthase (glutamine-hydrolyzing) activity"/>
    <property type="evidence" value="ECO:0007669"/>
    <property type="project" value="RHEA"/>
</dbReference>
<dbReference type="GO" id="GO:0005524">
    <property type="term" value="F:ATP binding"/>
    <property type="evidence" value="ECO:0007669"/>
    <property type="project" value="UniProtKB-KW"/>
</dbReference>
<dbReference type="GO" id="GO:0050567">
    <property type="term" value="F:glutaminyl-tRNA synthase (glutamine-hydrolyzing) activity"/>
    <property type="evidence" value="ECO:0007669"/>
    <property type="project" value="UniProtKB-UniRule"/>
</dbReference>
<dbReference type="GO" id="GO:0070681">
    <property type="term" value="P:glutaminyl-tRNAGln biosynthesis via transamidation"/>
    <property type="evidence" value="ECO:0007669"/>
    <property type="project" value="TreeGrafter"/>
</dbReference>
<dbReference type="GO" id="GO:0006450">
    <property type="term" value="P:regulation of translational fidelity"/>
    <property type="evidence" value="ECO:0007669"/>
    <property type="project" value="InterPro"/>
</dbReference>
<dbReference type="GO" id="GO:0006412">
    <property type="term" value="P:translation"/>
    <property type="evidence" value="ECO:0007669"/>
    <property type="project" value="UniProtKB-UniRule"/>
</dbReference>
<dbReference type="Gene3D" id="1.10.20.60">
    <property type="entry name" value="Glu-tRNAGln amidotransferase C subunit, N-terminal domain"/>
    <property type="match status" value="1"/>
</dbReference>
<dbReference type="HAMAP" id="MF_00122">
    <property type="entry name" value="GatC"/>
    <property type="match status" value="1"/>
</dbReference>
<dbReference type="InterPro" id="IPR036113">
    <property type="entry name" value="Asp/Glu-ADT_sf_sub_c"/>
</dbReference>
<dbReference type="InterPro" id="IPR003837">
    <property type="entry name" value="GatC"/>
</dbReference>
<dbReference type="NCBIfam" id="TIGR00135">
    <property type="entry name" value="gatC"/>
    <property type="match status" value="1"/>
</dbReference>
<dbReference type="PANTHER" id="PTHR15004">
    <property type="entry name" value="GLUTAMYL-TRNA(GLN) AMIDOTRANSFERASE SUBUNIT C, MITOCHONDRIAL"/>
    <property type="match status" value="1"/>
</dbReference>
<dbReference type="PANTHER" id="PTHR15004:SF0">
    <property type="entry name" value="GLUTAMYL-TRNA(GLN) AMIDOTRANSFERASE SUBUNIT C, MITOCHONDRIAL"/>
    <property type="match status" value="1"/>
</dbReference>
<dbReference type="Pfam" id="PF02686">
    <property type="entry name" value="GatC"/>
    <property type="match status" value="1"/>
</dbReference>
<dbReference type="SUPFAM" id="SSF141000">
    <property type="entry name" value="Glu-tRNAGln amidotransferase C subunit"/>
    <property type="match status" value="1"/>
</dbReference>
<reference key="1">
    <citation type="submission" date="2005-10" db="EMBL/GenBank/DDBJ databases">
        <title>Complete sequence of Pelobacter carbinolicus DSM 2380.</title>
        <authorList>
            <person name="Copeland A."/>
            <person name="Lucas S."/>
            <person name="Lapidus A."/>
            <person name="Barry K."/>
            <person name="Detter J.C."/>
            <person name="Glavina T."/>
            <person name="Hammon N."/>
            <person name="Israni S."/>
            <person name="Pitluck S."/>
            <person name="Chertkov O."/>
            <person name="Schmutz J."/>
            <person name="Larimer F."/>
            <person name="Land M."/>
            <person name="Kyrpides N."/>
            <person name="Ivanova N."/>
            <person name="Richardson P."/>
        </authorList>
    </citation>
    <scope>NUCLEOTIDE SEQUENCE [LARGE SCALE GENOMIC DNA]</scope>
    <source>
        <strain>DSM 2380 / NBRC 103641 / GraBd1</strain>
    </source>
</reference>
<proteinExistence type="inferred from homology"/>
<name>GATC_SYNC1</name>
<gene>
    <name evidence="1" type="primary">gatC</name>
    <name type="ordered locus">Pcar_2167</name>
</gene>
<keyword id="KW-0067">ATP-binding</keyword>
<keyword id="KW-0436">Ligase</keyword>
<keyword id="KW-0547">Nucleotide-binding</keyword>
<keyword id="KW-0648">Protein biosynthesis</keyword>
<keyword id="KW-1185">Reference proteome</keyword>
<feature type="chain" id="PRO_1000016165" description="Aspartyl/glutamyl-tRNA(Asn/Gln) amidotransferase subunit C">
    <location>
        <begin position="1"/>
        <end position="95"/>
    </location>
</feature>
<accession>Q3A2K1</accession>
<protein>
    <recommendedName>
        <fullName evidence="1">Aspartyl/glutamyl-tRNA(Asn/Gln) amidotransferase subunit C</fullName>
        <shortName evidence="1">Asp/Glu-ADT subunit C</shortName>
        <ecNumber evidence="1">6.3.5.-</ecNumber>
    </recommendedName>
</protein>